<keyword id="KW-0045">Antibiotic biosynthesis</keyword>
<keyword id="KW-0843">Virulence</keyword>
<reference key="1">
    <citation type="journal article" date="1998" name="J. Bacteriol.">
        <title>A seven-gene locus for synthesis of phenazine-1-carboxylic acid by Pseudomonas fluorescens 2-79.</title>
        <authorList>
            <person name="Mavrodi D.V."/>
            <person name="Ksenzenko V.N."/>
            <person name="Bonsall R.F."/>
            <person name="Cook R.J."/>
            <person name="Boronin A.M."/>
            <person name="Thomashow L.S."/>
        </authorList>
    </citation>
    <scope>NUCLEOTIDE SEQUENCE [GENOMIC DNA]</scope>
    <source>
        <strain>NRRL B-15132 / 2-79</strain>
    </source>
</reference>
<sequence length="163" mass="18706">MPGSLSSGGFNDHLELRRKNRATVDQYMRTNGEDRLRRHELFTPDGSGGSWNTETGEPLVFKGHAKLAALGVWLHQCFPDWQWHNVRVFETDNPNHFWVESDGRGTTRVPGYPEGYCENHYIHSFELDNGKITQNREFMNPFEQLRALGIPVPKIKREGIPAS</sequence>
<accession>Q51787</accession>
<comment type="function">
    <text>Involved in the biosynthesis of the antibiotic, phenazine, a nitrogen-containing heterocyclic molecule having important roles in virulence, competition and biological control.</text>
</comment>
<comment type="similarity">
    <text evidence="1">Belongs to the PhzA/PhzB family.</text>
</comment>
<protein>
    <recommendedName>
        <fullName>Phenazine biosynthesis protein PhzA</fullName>
    </recommendedName>
</protein>
<dbReference type="EMBL" id="L48616">
    <property type="protein sequence ID" value="AAC18900.1"/>
    <property type="molecule type" value="Genomic_DNA"/>
</dbReference>
<dbReference type="RefSeq" id="WP_043050170.1">
    <property type="nucleotide sequence ID" value="NZ_JXCQ01000041.1"/>
</dbReference>
<dbReference type="SMR" id="Q51787"/>
<dbReference type="GO" id="GO:0017000">
    <property type="term" value="P:antibiotic biosynthetic process"/>
    <property type="evidence" value="ECO:0007669"/>
    <property type="project" value="UniProtKB-KW"/>
</dbReference>
<dbReference type="Gene3D" id="3.10.450.50">
    <property type="match status" value="1"/>
</dbReference>
<dbReference type="InterPro" id="IPR032710">
    <property type="entry name" value="NTF2-like_dom_sf"/>
</dbReference>
<dbReference type="InterPro" id="IPR004964">
    <property type="entry name" value="PhzA_PhzB"/>
</dbReference>
<dbReference type="Pfam" id="PF03284">
    <property type="entry name" value="PHZA_PHZB"/>
    <property type="match status" value="1"/>
</dbReference>
<dbReference type="SUPFAM" id="SSF54427">
    <property type="entry name" value="NTF2-like"/>
    <property type="match status" value="1"/>
</dbReference>
<proteinExistence type="inferred from homology"/>
<evidence type="ECO:0000305" key="1"/>
<feature type="chain" id="PRO_0000058419" description="Phenazine biosynthesis protein PhzA">
    <location>
        <begin position="1"/>
        <end position="163"/>
    </location>
</feature>
<gene>
    <name type="primary">phzA</name>
</gene>
<name>PHZA_PSEFL</name>
<organism>
    <name type="scientific">Pseudomonas fluorescens</name>
    <dbReference type="NCBI Taxonomy" id="294"/>
    <lineage>
        <taxon>Bacteria</taxon>
        <taxon>Pseudomonadati</taxon>
        <taxon>Pseudomonadota</taxon>
        <taxon>Gammaproteobacteria</taxon>
        <taxon>Pseudomonadales</taxon>
        <taxon>Pseudomonadaceae</taxon>
        <taxon>Pseudomonas</taxon>
    </lineage>
</organism>